<gene>
    <name evidence="2" type="primary">tuf</name>
    <name type="ordered locus">MK0247</name>
</gene>
<proteinExistence type="inferred from homology"/>
<name>EF1A_METKA</name>
<accession>Q8TYP6</accession>
<organism>
    <name type="scientific">Methanopyrus kandleri (strain AV19 / DSM 6324 / JCM 9639 / NBRC 100938)</name>
    <dbReference type="NCBI Taxonomy" id="190192"/>
    <lineage>
        <taxon>Archaea</taxon>
        <taxon>Methanobacteriati</taxon>
        <taxon>Methanobacteriota</taxon>
        <taxon>Methanomada group</taxon>
        <taxon>Methanopyri</taxon>
        <taxon>Methanopyrales</taxon>
        <taxon>Methanopyraceae</taxon>
        <taxon>Methanopyrus</taxon>
    </lineage>
</organism>
<feature type="chain" id="PRO_0000090981" description="Elongation factor 1-alpha">
    <location>
        <begin position="1"/>
        <end position="423"/>
    </location>
</feature>
<feature type="domain" description="tr-type G">
    <location>
        <begin position="5"/>
        <end position="211"/>
    </location>
</feature>
<feature type="region of interest" description="G1" evidence="1">
    <location>
        <begin position="14"/>
        <end position="21"/>
    </location>
</feature>
<feature type="region of interest" description="G2" evidence="1">
    <location>
        <begin position="60"/>
        <end position="64"/>
    </location>
</feature>
<feature type="region of interest" description="G3" evidence="1">
    <location>
        <begin position="81"/>
        <end position="84"/>
    </location>
</feature>
<feature type="region of interest" description="G4" evidence="1">
    <location>
        <begin position="136"/>
        <end position="139"/>
    </location>
</feature>
<feature type="region of interest" description="G5" evidence="1">
    <location>
        <begin position="175"/>
        <end position="177"/>
    </location>
</feature>
<feature type="binding site" evidence="2">
    <location>
        <begin position="14"/>
        <end position="21"/>
    </location>
    <ligand>
        <name>GTP</name>
        <dbReference type="ChEBI" id="CHEBI:37565"/>
    </ligand>
</feature>
<feature type="binding site" evidence="2">
    <location>
        <position position="21"/>
    </location>
    <ligand>
        <name>Mg(2+)</name>
        <dbReference type="ChEBI" id="CHEBI:18420"/>
    </ligand>
</feature>
<feature type="binding site" evidence="2">
    <location>
        <begin position="81"/>
        <end position="85"/>
    </location>
    <ligand>
        <name>GTP</name>
        <dbReference type="ChEBI" id="CHEBI:37565"/>
    </ligand>
</feature>
<feature type="binding site" evidence="2">
    <location>
        <begin position="136"/>
        <end position="139"/>
    </location>
    <ligand>
        <name>GTP</name>
        <dbReference type="ChEBI" id="CHEBI:37565"/>
    </ligand>
</feature>
<comment type="function">
    <text evidence="2">GTP hydrolase that promotes the GTP-dependent binding of aminoacyl-tRNA to the A-site of ribosomes during protein biosynthesis.</text>
</comment>
<comment type="catalytic activity">
    <reaction evidence="2">
        <text>GTP + H2O = GDP + phosphate + H(+)</text>
        <dbReference type="Rhea" id="RHEA:19669"/>
        <dbReference type="ChEBI" id="CHEBI:15377"/>
        <dbReference type="ChEBI" id="CHEBI:15378"/>
        <dbReference type="ChEBI" id="CHEBI:37565"/>
        <dbReference type="ChEBI" id="CHEBI:43474"/>
        <dbReference type="ChEBI" id="CHEBI:58189"/>
        <dbReference type="EC" id="3.6.5.3"/>
    </reaction>
    <physiologicalReaction direction="left-to-right" evidence="2">
        <dbReference type="Rhea" id="RHEA:19670"/>
    </physiologicalReaction>
</comment>
<comment type="subcellular location">
    <subcellularLocation>
        <location evidence="2">Cytoplasm</location>
    </subcellularLocation>
</comment>
<comment type="similarity">
    <text evidence="2">Belongs to the TRAFAC class translation factor GTPase superfamily. Classic translation factor GTPase family. EF-Tu/EF-1A subfamily.</text>
</comment>
<evidence type="ECO:0000250" key="1"/>
<evidence type="ECO:0000255" key="2">
    <source>
        <dbReference type="HAMAP-Rule" id="MF_00118"/>
    </source>
</evidence>
<protein>
    <recommendedName>
        <fullName evidence="2">Elongation factor 1-alpha</fullName>
        <shortName evidence="2">EF-1-alpha</shortName>
        <ecNumber evidence="2">3.6.5.3</ecNumber>
    </recommendedName>
    <alternativeName>
        <fullName evidence="2">Elongation factor Tu</fullName>
        <shortName evidence="2">EF-Tu</shortName>
    </alternativeName>
</protein>
<keyword id="KW-0963">Cytoplasm</keyword>
<keyword id="KW-0251">Elongation factor</keyword>
<keyword id="KW-0342">GTP-binding</keyword>
<keyword id="KW-0378">Hydrolase</keyword>
<keyword id="KW-0460">Magnesium</keyword>
<keyword id="KW-0479">Metal-binding</keyword>
<keyword id="KW-0547">Nucleotide-binding</keyword>
<keyword id="KW-0648">Protein biosynthesis</keyword>
<keyword id="KW-1185">Reference proteome</keyword>
<sequence>MAKEKEHINLAFIGHVDHGKSTLVGRLLYDTGVIEDKDLGEGEDKFRVIMDTLEEERERGVTIDLAHTKFETDNYEFTIVDCPGHRDFVKNMITGASQADAAILVVAADDGVMPQTKEHAFLAKTLGIDQLIVAINKMDLVDYDENRYEEVKQEVAELLKTIGYNVDEIPFIPISAFEGDNVVEKSDNTPWYDGPTLLEALDNLEPPEKPTDKPLRIPIQDVYSITGVGTVPVGRVETGVLEVGDTVRFEPAYTATGGRKGEGEVRSIEMHHEEIERAEPGDNIGFNVKGVGKNDISRGDVACHPDEPATVVTPDDTFIAQIVVLQHPSAITAGYTPVFHCHTAQVACKFEELIEKIDPATGEVIEENPDFLKTGEAAKVRIRPTKPMVIEEVSFIPQLGRFAIRDMGQTVAAGMCVKIEKEE</sequence>
<dbReference type="EC" id="3.6.5.3" evidence="2"/>
<dbReference type="EMBL" id="AE009439">
    <property type="protein sequence ID" value="AAM01464.1"/>
    <property type="molecule type" value="Genomic_DNA"/>
</dbReference>
<dbReference type="RefSeq" id="WP_011018619.1">
    <property type="nucleotide sequence ID" value="NC_003551.1"/>
</dbReference>
<dbReference type="SMR" id="Q8TYP6"/>
<dbReference type="FunCoup" id="Q8TYP6">
    <property type="interactions" value="115"/>
</dbReference>
<dbReference type="STRING" id="190192.MK0247"/>
<dbReference type="PaxDb" id="190192-MK0247"/>
<dbReference type="EnsemblBacteria" id="AAM01464">
    <property type="protein sequence ID" value="AAM01464"/>
    <property type="gene ID" value="MK0247"/>
</dbReference>
<dbReference type="GeneID" id="1477550"/>
<dbReference type="KEGG" id="mka:MK0247"/>
<dbReference type="PATRIC" id="fig|190192.8.peg.249"/>
<dbReference type="HOGENOM" id="CLU_007265_3_5_2"/>
<dbReference type="InParanoid" id="Q8TYP6"/>
<dbReference type="OrthoDB" id="371718at2157"/>
<dbReference type="Proteomes" id="UP000001826">
    <property type="component" value="Chromosome"/>
</dbReference>
<dbReference type="GO" id="GO:0005737">
    <property type="term" value="C:cytoplasm"/>
    <property type="evidence" value="ECO:0007669"/>
    <property type="project" value="UniProtKB-SubCell"/>
</dbReference>
<dbReference type="GO" id="GO:0005525">
    <property type="term" value="F:GTP binding"/>
    <property type="evidence" value="ECO:0007669"/>
    <property type="project" value="UniProtKB-UniRule"/>
</dbReference>
<dbReference type="GO" id="GO:0003924">
    <property type="term" value="F:GTPase activity"/>
    <property type="evidence" value="ECO:0007669"/>
    <property type="project" value="InterPro"/>
</dbReference>
<dbReference type="GO" id="GO:0003746">
    <property type="term" value="F:translation elongation factor activity"/>
    <property type="evidence" value="ECO:0007669"/>
    <property type="project" value="UniProtKB-UniRule"/>
</dbReference>
<dbReference type="CDD" id="cd01883">
    <property type="entry name" value="EF1_alpha"/>
    <property type="match status" value="1"/>
</dbReference>
<dbReference type="CDD" id="cd03693">
    <property type="entry name" value="EF1_alpha_II"/>
    <property type="match status" value="1"/>
</dbReference>
<dbReference type="CDD" id="cd03705">
    <property type="entry name" value="EF1_alpha_III"/>
    <property type="match status" value="1"/>
</dbReference>
<dbReference type="FunFam" id="2.40.30.10:FF:000003">
    <property type="entry name" value="Elongation factor 1-alpha"/>
    <property type="match status" value="1"/>
</dbReference>
<dbReference type="FunFam" id="2.40.30.10:FF:000005">
    <property type="entry name" value="Elongation factor 1-alpha"/>
    <property type="match status" value="1"/>
</dbReference>
<dbReference type="Gene3D" id="3.40.50.300">
    <property type="entry name" value="P-loop containing nucleotide triphosphate hydrolases"/>
    <property type="match status" value="1"/>
</dbReference>
<dbReference type="Gene3D" id="2.40.30.10">
    <property type="entry name" value="Translation factors"/>
    <property type="match status" value="2"/>
</dbReference>
<dbReference type="HAMAP" id="MF_00118_A">
    <property type="entry name" value="EF_Tu_A"/>
    <property type="match status" value="1"/>
</dbReference>
<dbReference type="InterPro" id="IPR004161">
    <property type="entry name" value="EFTu-like_2"/>
</dbReference>
<dbReference type="InterPro" id="IPR031157">
    <property type="entry name" value="G_TR_CS"/>
</dbReference>
<dbReference type="InterPro" id="IPR054696">
    <property type="entry name" value="GTP-eEF1A_C"/>
</dbReference>
<dbReference type="InterPro" id="IPR027417">
    <property type="entry name" value="P-loop_NTPase"/>
</dbReference>
<dbReference type="InterPro" id="IPR005225">
    <property type="entry name" value="Small_GTP-bd"/>
</dbReference>
<dbReference type="InterPro" id="IPR000795">
    <property type="entry name" value="T_Tr_GTP-bd_dom"/>
</dbReference>
<dbReference type="InterPro" id="IPR050100">
    <property type="entry name" value="TRAFAC_GTPase_members"/>
</dbReference>
<dbReference type="InterPro" id="IPR009000">
    <property type="entry name" value="Transl_B-barrel_sf"/>
</dbReference>
<dbReference type="InterPro" id="IPR009001">
    <property type="entry name" value="Transl_elong_EF1A/Init_IF2_C"/>
</dbReference>
<dbReference type="InterPro" id="IPR004539">
    <property type="entry name" value="Transl_elong_EF1A_euk/arc"/>
</dbReference>
<dbReference type="NCBIfam" id="TIGR00483">
    <property type="entry name" value="EF-1_alpha"/>
    <property type="match status" value="1"/>
</dbReference>
<dbReference type="NCBIfam" id="NF008969">
    <property type="entry name" value="PRK12317.1"/>
    <property type="match status" value="1"/>
</dbReference>
<dbReference type="NCBIfam" id="TIGR00231">
    <property type="entry name" value="small_GTP"/>
    <property type="match status" value="1"/>
</dbReference>
<dbReference type="PANTHER" id="PTHR23115">
    <property type="entry name" value="TRANSLATION FACTOR"/>
    <property type="match status" value="1"/>
</dbReference>
<dbReference type="Pfam" id="PF22594">
    <property type="entry name" value="GTP-eEF1A_C"/>
    <property type="match status" value="1"/>
</dbReference>
<dbReference type="Pfam" id="PF00009">
    <property type="entry name" value="GTP_EFTU"/>
    <property type="match status" value="1"/>
</dbReference>
<dbReference type="Pfam" id="PF03144">
    <property type="entry name" value="GTP_EFTU_D2"/>
    <property type="match status" value="1"/>
</dbReference>
<dbReference type="PRINTS" id="PR00315">
    <property type="entry name" value="ELONGATNFCT"/>
</dbReference>
<dbReference type="SUPFAM" id="SSF50465">
    <property type="entry name" value="EF-Tu/eEF-1alpha/eIF2-gamma C-terminal domain"/>
    <property type="match status" value="1"/>
</dbReference>
<dbReference type="SUPFAM" id="SSF52540">
    <property type="entry name" value="P-loop containing nucleoside triphosphate hydrolases"/>
    <property type="match status" value="1"/>
</dbReference>
<dbReference type="SUPFAM" id="SSF50447">
    <property type="entry name" value="Translation proteins"/>
    <property type="match status" value="1"/>
</dbReference>
<dbReference type="PROSITE" id="PS00301">
    <property type="entry name" value="G_TR_1"/>
    <property type="match status" value="1"/>
</dbReference>
<dbReference type="PROSITE" id="PS51722">
    <property type="entry name" value="G_TR_2"/>
    <property type="match status" value="1"/>
</dbReference>
<reference key="1">
    <citation type="journal article" date="2002" name="Proc. Natl. Acad. Sci. U.S.A.">
        <title>The complete genome of hyperthermophile Methanopyrus kandleri AV19 and monophyly of archaeal methanogens.</title>
        <authorList>
            <person name="Slesarev A.I."/>
            <person name="Mezhevaya K.V."/>
            <person name="Makarova K.S."/>
            <person name="Polushin N.N."/>
            <person name="Shcherbinina O.V."/>
            <person name="Shakhova V.V."/>
            <person name="Belova G.I."/>
            <person name="Aravind L."/>
            <person name="Natale D.A."/>
            <person name="Rogozin I.B."/>
            <person name="Tatusov R.L."/>
            <person name="Wolf Y.I."/>
            <person name="Stetter K.O."/>
            <person name="Malykh A.G."/>
            <person name="Koonin E.V."/>
            <person name="Kozyavkin S.A."/>
        </authorList>
    </citation>
    <scope>NUCLEOTIDE SEQUENCE [LARGE SCALE GENOMIC DNA]</scope>
    <source>
        <strain>AV19 / DSM 6324 / JCM 9639 / NBRC 100938</strain>
    </source>
</reference>